<feature type="chain" id="PRO_0000422528" description="Actin-related protein 2/3 complex subunit 2A">
    <location>
        <begin position="1"/>
        <end position="318"/>
    </location>
</feature>
<feature type="region of interest" description="Disordered" evidence="2">
    <location>
        <begin position="297"/>
        <end position="318"/>
    </location>
</feature>
<reference key="1">
    <citation type="journal article" date="2000" name="Nature">
        <title>Sequence and analysis of chromosome 1 of the plant Arabidopsis thaliana.</title>
        <authorList>
            <person name="Theologis A."/>
            <person name="Ecker J.R."/>
            <person name="Palm C.J."/>
            <person name="Federspiel N.A."/>
            <person name="Kaul S."/>
            <person name="White O."/>
            <person name="Alonso J."/>
            <person name="Altafi H."/>
            <person name="Araujo R."/>
            <person name="Bowman C.L."/>
            <person name="Brooks S.Y."/>
            <person name="Buehler E."/>
            <person name="Chan A."/>
            <person name="Chao Q."/>
            <person name="Chen H."/>
            <person name="Cheuk R.F."/>
            <person name="Chin C.W."/>
            <person name="Chung M.K."/>
            <person name="Conn L."/>
            <person name="Conway A.B."/>
            <person name="Conway A.R."/>
            <person name="Creasy T.H."/>
            <person name="Dewar K."/>
            <person name="Dunn P."/>
            <person name="Etgu P."/>
            <person name="Feldblyum T.V."/>
            <person name="Feng J.-D."/>
            <person name="Fong B."/>
            <person name="Fujii C.Y."/>
            <person name="Gill J.E."/>
            <person name="Goldsmith A.D."/>
            <person name="Haas B."/>
            <person name="Hansen N.F."/>
            <person name="Hughes B."/>
            <person name="Huizar L."/>
            <person name="Hunter J.L."/>
            <person name="Jenkins J."/>
            <person name="Johnson-Hopson C."/>
            <person name="Khan S."/>
            <person name="Khaykin E."/>
            <person name="Kim C.J."/>
            <person name="Koo H.L."/>
            <person name="Kremenetskaia I."/>
            <person name="Kurtz D.B."/>
            <person name="Kwan A."/>
            <person name="Lam B."/>
            <person name="Langin-Hooper S."/>
            <person name="Lee A."/>
            <person name="Lee J.M."/>
            <person name="Lenz C.A."/>
            <person name="Li J.H."/>
            <person name="Li Y.-P."/>
            <person name="Lin X."/>
            <person name="Liu S.X."/>
            <person name="Liu Z.A."/>
            <person name="Luros J.S."/>
            <person name="Maiti R."/>
            <person name="Marziali A."/>
            <person name="Militscher J."/>
            <person name="Miranda M."/>
            <person name="Nguyen M."/>
            <person name="Nierman W.C."/>
            <person name="Osborne B.I."/>
            <person name="Pai G."/>
            <person name="Peterson J."/>
            <person name="Pham P.K."/>
            <person name="Rizzo M."/>
            <person name="Rooney T."/>
            <person name="Rowley D."/>
            <person name="Sakano H."/>
            <person name="Salzberg S.L."/>
            <person name="Schwartz J.R."/>
            <person name="Shinn P."/>
            <person name="Southwick A.M."/>
            <person name="Sun H."/>
            <person name="Tallon L.J."/>
            <person name="Tambunga G."/>
            <person name="Toriumi M.J."/>
            <person name="Town C.D."/>
            <person name="Utterback T."/>
            <person name="Van Aken S."/>
            <person name="Vaysberg M."/>
            <person name="Vysotskaia V.S."/>
            <person name="Walker M."/>
            <person name="Wu D."/>
            <person name="Yu G."/>
            <person name="Fraser C.M."/>
            <person name="Venter J.C."/>
            <person name="Davis R.W."/>
        </authorList>
    </citation>
    <scope>NUCLEOTIDE SEQUENCE [LARGE SCALE GENOMIC DNA]</scope>
    <source>
        <strain>cv. Columbia</strain>
    </source>
</reference>
<reference key="2">
    <citation type="journal article" date="2017" name="Plant J.">
        <title>Araport11: a complete reannotation of the Arabidopsis thaliana reference genome.</title>
        <authorList>
            <person name="Cheng C.Y."/>
            <person name="Krishnakumar V."/>
            <person name="Chan A.P."/>
            <person name="Thibaud-Nissen F."/>
            <person name="Schobel S."/>
            <person name="Town C.D."/>
        </authorList>
    </citation>
    <scope>GENOME REANNOTATION</scope>
    <source>
        <strain>cv. Columbia</strain>
    </source>
</reference>
<reference key="3">
    <citation type="journal article" date="2002" name="Science">
        <title>Functional annotation of a full-length Arabidopsis cDNA collection.</title>
        <authorList>
            <person name="Seki M."/>
            <person name="Narusaka M."/>
            <person name="Kamiya A."/>
            <person name="Ishida J."/>
            <person name="Satou M."/>
            <person name="Sakurai T."/>
            <person name="Nakajima M."/>
            <person name="Enju A."/>
            <person name="Akiyama K."/>
            <person name="Oono Y."/>
            <person name="Muramatsu M."/>
            <person name="Hayashizaki Y."/>
            <person name="Kawai J."/>
            <person name="Carninci P."/>
            <person name="Itoh M."/>
            <person name="Ishii Y."/>
            <person name="Arakawa T."/>
            <person name="Shibata K."/>
            <person name="Shinagawa A."/>
            <person name="Shinozaki K."/>
        </authorList>
    </citation>
    <scope>NUCLEOTIDE SEQUENCE [LARGE SCALE MRNA]</scope>
    <source>
        <strain>cv. Columbia</strain>
    </source>
</reference>
<reference key="4">
    <citation type="journal article" date="2003" name="Science">
        <title>Empirical analysis of transcriptional activity in the Arabidopsis genome.</title>
        <authorList>
            <person name="Yamada K."/>
            <person name="Lim J."/>
            <person name="Dale J.M."/>
            <person name="Chen H."/>
            <person name="Shinn P."/>
            <person name="Palm C.J."/>
            <person name="Southwick A.M."/>
            <person name="Wu H.C."/>
            <person name="Kim C.J."/>
            <person name="Nguyen M."/>
            <person name="Pham P.K."/>
            <person name="Cheuk R.F."/>
            <person name="Karlin-Newmann G."/>
            <person name="Liu S.X."/>
            <person name="Lam B."/>
            <person name="Sakano H."/>
            <person name="Wu T."/>
            <person name="Yu G."/>
            <person name="Miranda M."/>
            <person name="Quach H.L."/>
            <person name="Tripp M."/>
            <person name="Chang C.H."/>
            <person name="Lee J.M."/>
            <person name="Toriumi M.J."/>
            <person name="Chan M.M."/>
            <person name="Tang C.C."/>
            <person name="Onodera C.S."/>
            <person name="Deng J.M."/>
            <person name="Akiyama K."/>
            <person name="Ansari Y."/>
            <person name="Arakawa T."/>
            <person name="Banh J."/>
            <person name="Banno F."/>
            <person name="Bowser L."/>
            <person name="Brooks S.Y."/>
            <person name="Carninci P."/>
            <person name="Chao Q."/>
            <person name="Choy N."/>
            <person name="Enju A."/>
            <person name="Goldsmith A.D."/>
            <person name="Gurjal M."/>
            <person name="Hansen N.F."/>
            <person name="Hayashizaki Y."/>
            <person name="Johnson-Hopson C."/>
            <person name="Hsuan V.W."/>
            <person name="Iida K."/>
            <person name="Karnes M."/>
            <person name="Khan S."/>
            <person name="Koesema E."/>
            <person name="Ishida J."/>
            <person name="Jiang P.X."/>
            <person name="Jones T."/>
            <person name="Kawai J."/>
            <person name="Kamiya A."/>
            <person name="Meyers C."/>
            <person name="Nakajima M."/>
            <person name="Narusaka M."/>
            <person name="Seki M."/>
            <person name="Sakurai T."/>
            <person name="Satou M."/>
            <person name="Tamse R."/>
            <person name="Vaysberg M."/>
            <person name="Wallender E.K."/>
            <person name="Wong C."/>
            <person name="Yamamura Y."/>
            <person name="Yuan S."/>
            <person name="Shinozaki K."/>
            <person name="Davis R.W."/>
            <person name="Theologis A."/>
            <person name="Ecker J.R."/>
        </authorList>
    </citation>
    <scope>NUCLEOTIDE SEQUENCE [LARGE SCALE MRNA]</scope>
    <source>
        <strain>cv. Columbia</strain>
    </source>
</reference>
<reference key="5">
    <citation type="submission" date="2002-03" db="EMBL/GenBank/DDBJ databases">
        <title>Full-length cDNA from Arabidopsis thaliana.</title>
        <authorList>
            <person name="Brover V.V."/>
            <person name="Troukhan M.E."/>
            <person name="Alexandrov N.A."/>
            <person name="Lu Y.-P."/>
            <person name="Flavell R.B."/>
            <person name="Feldmann K.A."/>
        </authorList>
    </citation>
    <scope>NUCLEOTIDE SEQUENCE [LARGE SCALE MRNA]</scope>
</reference>
<reference key="6">
    <citation type="journal article" date="2003" name="Plant Physiol.">
        <title>The putative Arabidopsis arp2/3 complex controls leaf cell morphogenesis.</title>
        <authorList>
            <person name="Li S."/>
            <person name="Blanchoin L."/>
            <person name="Yang Z."/>
            <person name="Lord E.M."/>
        </authorList>
    </citation>
    <scope>TISSUE SPECIFICITY</scope>
    <scope>IDENTIFICATION OF THE ARP2/3 COMPLEX</scope>
</reference>
<reference key="7">
    <citation type="journal article" date="2004" name="Plant Cell Physiol.">
        <title>Actin control over microtubules suggested by DISTORTED2 encoding the Arabidopsis ARPC2 subunit homolog.</title>
        <authorList>
            <person name="Saedler R."/>
            <person name="Mathur N."/>
            <person name="Srinivas B.P."/>
            <person name="Kernebeck B."/>
            <person name="Huelskamp M."/>
            <person name="Mathur J."/>
        </authorList>
    </citation>
    <scope>FUNCTION</scope>
    <scope>DISRUPTION PHENOTYPE</scope>
</reference>
<reference key="8">
    <citation type="journal article" date="2004" name="Plant J.">
        <title>DISTORTED2 encodes an ARPC2 subunit of the putative Arabidopsis ARP2/3 complex.</title>
        <authorList>
            <person name="El-Din El-Assal S."/>
            <person name="Le J."/>
            <person name="Basu D."/>
            <person name="Mallery E.L."/>
            <person name="Szymanski D.B."/>
        </authorList>
    </citation>
    <scope>FUNCTION</scope>
    <scope>INTERACTION WITH ARPC4</scope>
    <scope>TISSUE SPECIFICITY</scope>
</reference>
<reference key="9">
    <citation type="journal article" date="2005" name="Curr. Opin. Plant Biol.">
        <title>Breaking the WAVE complex: the point of Arabidopsis trichomes.</title>
        <authorList>
            <person name="Szymanski D.B."/>
        </authorList>
    </citation>
    <scope>REVIEW</scope>
</reference>
<comment type="function">
    <text evidence="1 4 5">Functions as actin-binding component of the Arp2/3 complex which is involved in regulation of actin polymerization and together with an activating nucleation-promoting factor (NPF) mediates the formation of branched actin networks. Seems to contact the mother actin filament (By similarity). Arp2/3 complex plays a critical role in the control of cell morphogenesis via the modulation of cell polarity development.</text>
</comment>
<comment type="subunit">
    <text evidence="4">Component of the Arp2/3 complex composed of ARP2, ARP3, ARPC1/p41-ARC, ARPC2/p34-ARC, ARPC3/p21-ARC, ARPC4/p20-ARC and ARPC5/p16-ARC. Interacts with ARPC4.</text>
</comment>
<comment type="interaction">
    <interactant intactId="EBI-1547736">
        <id>Q8LGI3</id>
    </interactant>
    <interactant intactId="EBI-1547718">
        <id>F4JUL9</id>
        <label>ARPC4</label>
    </interactant>
    <organismsDiffer>false</organismsDiffer>
    <experiments>3</experiments>
</comment>
<comment type="subcellular location">
    <subcellularLocation>
        <location evidence="1">Cytoplasm</location>
        <location evidence="1">Cytoskeleton</location>
    </subcellularLocation>
    <subcellularLocation>
        <location evidence="1">Cell projection</location>
    </subcellularLocation>
</comment>
<comment type="tissue specificity">
    <text evidence="3 4">Expressed at low levels in all tissues with a relatively highest expression in inflorescences.</text>
</comment>
<comment type="disruption phenotype">
    <text evidence="5">Distorted trichomes.</text>
</comment>
<comment type="similarity">
    <text evidence="6">Belongs to the ARPC2 family.</text>
</comment>
<comment type="sequence caution" evidence="6">
    <conflict type="erroneous gene model prediction">
        <sequence resource="EMBL-CDS" id="AAD32938"/>
    </conflict>
</comment>
<organism>
    <name type="scientific">Arabidopsis thaliana</name>
    <name type="common">Mouse-ear cress</name>
    <dbReference type="NCBI Taxonomy" id="3702"/>
    <lineage>
        <taxon>Eukaryota</taxon>
        <taxon>Viridiplantae</taxon>
        <taxon>Streptophyta</taxon>
        <taxon>Embryophyta</taxon>
        <taxon>Tracheophyta</taxon>
        <taxon>Spermatophyta</taxon>
        <taxon>Magnoliopsida</taxon>
        <taxon>eudicotyledons</taxon>
        <taxon>Gunneridae</taxon>
        <taxon>Pentapetalae</taxon>
        <taxon>rosids</taxon>
        <taxon>malvids</taxon>
        <taxon>Brassicales</taxon>
        <taxon>Brassicaceae</taxon>
        <taxon>Camelineae</taxon>
        <taxon>Arabidopsis</taxon>
    </lineage>
</organism>
<protein>
    <recommendedName>
        <fullName>Actin-related protein 2/3 complex subunit 2A</fullName>
    </recommendedName>
    <alternativeName>
        <fullName>Actin-related protein C2A</fullName>
    </alternativeName>
    <alternativeName>
        <fullName>Arp2/3 complex 34 kDa subunit</fullName>
        <shortName>p34-ARC</shortName>
    </alternativeName>
    <alternativeName>
        <fullName>Protein DISTORTED TRICHOMES 2</fullName>
    </alternativeName>
</protein>
<keyword id="KW-0009">Actin-binding</keyword>
<keyword id="KW-0966">Cell projection</keyword>
<keyword id="KW-0963">Cytoplasm</keyword>
<keyword id="KW-0206">Cytoskeleton</keyword>
<keyword id="KW-1185">Reference proteome</keyword>
<gene>
    <name type="primary">ARPC2A</name>
    <name type="synonym">DIS2</name>
    <name type="ordered locus">At1g30825</name>
    <name type="ORF">T17H7.13</name>
</gene>
<name>ARC2A_ARATH</name>
<proteinExistence type="evidence at protein level"/>
<evidence type="ECO:0000250" key="1"/>
<evidence type="ECO:0000256" key="2">
    <source>
        <dbReference type="SAM" id="MobiDB-lite"/>
    </source>
</evidence>
<evidence type="ECO:0000269" key="3">
    <source>
    </source>
</evidence>
<evidence type="ECO:0000269" key="4">
    <source>
    </source>
</evidence>
<evidence type="ECO:0000269" key="5">
    <source>
    </source>
</evidence>
<evidence type="ECO:0000305" key="6"/>
<accession>Q8LGI3</accession>
<accession>Q9SY27</accession>
<sequence length="318" mass="36041">MILLQSHSRFLLQTLLTRAQNLDKAVELDYQWIEFDDVRYHVQVTMKNPNLLLLSVSLPNPPPEAMSFDGLPLGAIEAIKTTYGTGFQILDPPRDGFSLTLKLNFSKVRPDEELLTKLASIREVVMGAPLKIIFKHLASRTVAPELDRLVAIMHRPNETFFLVPQADKVTVAFPMRFKDSVDTILATSFLKEFVEARRAAALNTAPSCSWSPTAPQELEGAPKETLSANAGFVTFVIFPRHVEGKKLDRTVWNLSTFHAYVSYHVKFSEGFMHTRMRRRVESMIQALDQAKPLEKTRSMNNKSFKRLGLNEVNHTNSK</sequence>
<dbReference type="EMBL" id="AC004135">
    <property type="protein sequence ID" value="AAD32938.1"/>
    <property type="status" value="ALT_SEQ"/>
    <property type="molecule type" value="Genomic_DNA"/>
</dbReference>
<dbReference type="EMBL" id="CP002684">
    <property type="protein sequence ID" value="AEE31281.1"/>
    <property type="molecule type" value="Genomic_DNA"/>
</dbReference>
<dbReference type="EMBL" id="AK118475">
    <property type="protein sequence ID" value="BAC43079.1"/>
    <property type="molecule type" value="mRNA"/>
</dbReference>
<dbReference type="EMBL" id="BT005308">
    <property type="protein sequence ID" value="AAO63372.1"/>
    <property type="molecule type" value="mRNA"/>
</dbReference>
<dbReference type="EMBL" id="AY084256">
    <property type="protein sequence ID" value="AAM60850.1"/>
    <property type="molecule type" value="mRNA"/>
</dbReference>
<dbReference type="PIR" id="B86434">
    <property type="entry name" value="B86434"/>
</dbReference>
<dbReference type="RefSeq" id="NP_564364.1">
    <property type="nucleotide sequence ID" value="NM_102820.3"/>
</dbReference>
<dbReference type="SMR" id="Q8LGI3"/>
<dbReference type="BioGRID" id="25200">
    <property type="interactions" value="2"/>
</dbReference>
<dbReference type="FunCoup" id="Q8LGI3">
    <property type="interactions" value="3850"/>
</dbReference>
<dbReference type="IntAct" id="Q8LGI3">
    <property type="interactions" value="2"/>
</dbReference>
<dbReference type="STRING" id="3702.Q8LGI3"/>
<dbReference type="PaxDb" id="3702-AT1G30825.1"/>
<dbReference type="ProteomicsDB" id="244429"/>
<dbReference type="EnsemblPlants" id="AT1G30825.1">
    <property type="protein sequence ID" value="AT1G30825.1"/>
    <property type="gene ID" value="AT1G30825"/>
</dbReference>
<dbReference type="GeneID" id="839965"/>
<dbReference type="Gramene" id="AT1G30825.1">
    <property type="protein sequence ID" value="AT1G30825.1"/>
    <property type="gene ID" value="AT1G30825"/>
</dbReference>
<dbReference type="KEGG" id="ath:AT1G30825"/>
<dbReference type="Araport" id="AT1G30825"/>
<dbReference type="TAIR" id="AT1G30825">
    <property type="gene designation" value="DIS2"/>
</dbReference>
<dbReference type="eggNOG" id="KOG2826">
    <property type="taxonomic scope" value="Eukaryota"/>
</dbReference>
<dbReference type="HOGENOM" id="CLU_059439_0_0_1"/>
<dbReference type="InParanoid" id="Q8LGI3"/>
<dbReference type="OMA" id="FRSYFHY"/>
<dbReference type="OrthoDB" id="148331at2759"/>
<dbReference type="PhylomeDB" id="Q8LGI3"/>
<dbReference type="PRO" id="PR:Q8LGI3"/>
<dbReference type="Proteomes" id="UP000006548">
    <property type="component" value="Chromosome 1"/>
</dbReference>
<dbReference type="ExpressionAtlas" id="Q8LGI3">
    <property type="expression patterns" value="baseline and differential"/>
</dbReference>
<dbReference type="GO" id="GO:0005885">
    <property type="term" value="C:Arp2/3 protein complex"/>
    <property type="evidence" value="ECO:0000315"/>
    <property type="project" value="UniProtKB"/>
</dbReference>
<dbReference type="GO" id="GO:0042995">
    <property type="term" value="C:cell projection"/>
    <property type="evidence" value="ECO:0007669"/>
    <property type="project" value="UniProtKB-SubCell"/>
</dbReference>
<dbReference type="GO" id="GO:0005737">
    <property type="term" value="C:cytoplasm"/>
    <property type="evidence" value="ECO:0007669"/>
    <property type="project" value="UniProtKB-KW"/>
</dbReference>
<dbReference type="GO" id="GO:0003779">
    <property type="term" value="F:actin binding"/>
    <property type="evidence" value="ECO:0007669"/>
    <property type="project" value="UniProtKB-KW"/>
</dbReference>
<dbReference type="GO" id="GO:0007015">
    <property type="term" value="P:actin filament organization"/>
    <property type="evidence" value="ECO:0000304"/>
    <property type="project" value="TAIR"/>
</dbReference>
<dbReference type="GO" id="GO:0030041">
    <property type="term" value="P:actin filament polymerization"/>
    <property type="evidence" value="ECO:0007669"/>
    <property type="project" value="InterPro"/>
</dbReference>
<dbReference type="GO" id="GO:0034314">
    <property type="term" value="P:Arp2/3 complex-mediated actin nucleation"/>
    <property type="evidence" value="ECO:0007669"/>
    <property type="project" value="InterPro"/>
</dbReference>
<dbReference type="GO" id="GO:0010090">
    <property type="term" value="P:trichome morphogenesis"/>
    <property type="evidence" value="ECO:0000303"/>
    <property type="project" value="TAIR"/>
</dbReference>
<dbReference type="FunFam" id="3.30.1460.20:FF:000006">
    <property type="entry name" value="Arp2/3 complex 34 kDa subunit"/>
    <property type="match status" value="1"/>
</dbReference>
<dbReference type="FunFam" id="3.30.1460.20:FF:000007">
    <property type="entry name" value="Arp2/3 complex 34 kDa subunit"/>
    <property type="match status" value="1"/>
</dbReference>
<dbReference type="Gene3D" id="3.30.1460.20">
    <property type="match status" value="2"/>
</dbReference>
<dbReference type="InterPro" id="IPR007188">
    <property type="entry name" value="ARPC2"/>
</dbReference>
<dbReference type="InterPro" id="IPR034666">
    <property type="entry name" value="ARPC2/4"/>
</dbReference>
<dbReference type="PANTHER" id="PTHR12058:SF0">
    <property type="entry name" value="ACTIN-RELATED PROTEIN 2_3 COMPLEX SUBUNIT 2"/>
    <property type="match status" value="1"/>
</dbReference>
<dbReference type="PANTHER" id="PTHR12058">
    <property type="entry name" value="ARP2/3 COMPLEX 34 KDA SUBUNIT"/>
    <property type="match status" value="1"/>
</dbReference>
<dbReference type="Pfam" id="PF04045">
    <property type="entry name" value="P34-Arc"/>
    <property type="match status" value="1"/>
</dbReference>
<dbReference type="SUPFAM" id="SSF69645">
    <property type="entry name" value="Arp2/3 complex subunits"/>
    <property type="match status" value="2"/>
</dbReference>